<evidence type="ECO:0000255" key="1">
    <source>
        <dbReference type="HAMAP-Rule" id="MF_00006"/>
    </source>
</evidence>
<sequence>MSQNDAAPGQQLWTGRFTEATDAFVERFSASVQFDARLALQDIQGSEAHARMLAARGVLTEAERDAILQGLAEIRQEVVEERFPWSPQLEDVHMNIEHRLTQRIGEAGKKLHTGRSRNDQIATDVRLFLREAIDTIRAELARFQHGLVELAEREADTIMPGFTHLQVAQPVTFGHHMLAWYEMLERDRDRLADCRRRLNQCPLGAAALAGTSFPIDREATARELGFDAPTRNSLDSVSDRDFAIEFCADASLILVHLSRMAEELVLWTSQQFGFIELPDRFCTGSSIMPQKKNPDVAELVRGKAARAQGSLVQLLTLMKGQPLAYNRDNQEDKEPLFDAVDTARDALTAFADMVPALSVNRERCRAAARAGFATATDLADYLVRQGLAFRDAHEVVGRAVRYATEADRDLAELSLEELQQFSTAIGDDVFAVLTLDGSVAARSHVGGTAPEQVRAQAQAARERLA</sequence>
<dbReference type="EC" id="4.3.2.1" evidence="1"/>
<dbReference type="EMBL" id="CP000544">
    <property type="protein sequence ID" value="ABM61800.1"/>
    <property type="molecule type" value="Genomic_DNA"/>
</dbReference>
<dbReference type="RefSeq" id="WP_011813823.1">
    <property type="nucleotide sequence ID" value="NC_008789.1"/>
</dbReference>
<dbReference type="SMR" id="A1WVT8"/>
<dbReference type="STRING" id="349124.Hhal_1024"/>
<dbReference type="KEGG" id="hha:Hhal_1024"/>
<dbReference type="eggNOG" id="COG0165">
    <property type="taxonomic scope" value="Bacteria"/>
</dbReference>
<dbReference type="HOGENOM" id="CLU_027272_2_3_6"/>
<dbReference type="OrthoDB" id="9769623at2"/>
<dbReference type="UniPathway" id="UPA00068">
    <property type="reaction ID" value="UER00114"/>
</dbReference>
<dbReference type="Proteomes" id="UP000000647">
    <property type="component" value="Chromosome"/>
</dbReference>
<dbReference type="GO" id="GO:0005829">
    <property type="term" value="C:cytosol"/>
    <property type="evidence" value="ECO:0007669"/>
    <property type="project" value="TreeGrafter"/>
</dbReference>
<dbReference type="GO" id="GO:0004056">
    <property type="term" value="F:argininosuccinate lyase activity"/>
    <property type="evidence" value="ECO:0007669"/>
    <property type="project" value="UniProtKB-UniRule"/>
</dbReference>
<dbReference type="GO" id="GO:0042450">
    <property type="term" value="P:arginine biosynthetic process via ornithine"/>
    <property type="evidence" value="ECO:0007669"/>
    <property type="project" value="InterPro"/>
</dbReference>
<dbReference type="GO" id="GO:0006526">
    <property type="term" value="P:L-arginine biosynthetic process"/>
    <property type="evidence" value="ECO:0007669"/>
    <property type="project" value="UniProtKB-UniRule"/>
</dbReference>
<dbReference type="CDD" id="cd01359">
    <property type="entry name" value="Argininosuccinate_lyase"/>
    <property type="match status" value="1"/>
</dbReference>
<dbReference type="FunFam" id="1.10.275.10:FF:000002">
    <property type="entry name" value="Argininosuccinate lyase"/>
    <property type="match status" value="1"/>
</dbReference>
<dbReference type="FunFam" id="1.10.40.30:FF:000001">
    <property type="entry name" value="Argininosuccinate lyase"/>
    <property type="match status" value="1"/>
</dbReference>
<dbReference type="FunFam" id="1.20.200.10:FF:000015">
    <property type="entry name" value="argininosuccinate lyase isoform X2"/>
    <property type="match status" value="1"/>
</dbReference>
<dbReference type="Gene3D" id="1.10.40.30">
    <property type="entry name" value="Fumarase/aspartase (C-terminal domain)"/>
    <property type="match status" value="1"/>
</dbReference>
<dbReference type="Gene3D" id="1.20.200.10">
    <property type="entry name" value="Fumarase/aspartase (Central domain)"/>
    <property type="match status" value="1"/>
</dbReference>
<dbReference type="Gene3D" id="1.10.275.10">
    <property type="entry name" value="Fumarase/aspartase (N-terminal domain)"/>
    <property type="match status" value="1"/>
</dbReference>
<dbReference type="HAMAP" id="MF_00006">
    <property type="entry name" value="Arg_succ_lyase"/>
    <property type="match status" value="1"/>
</dbReference>
<dbReference type="InterPro" id="IPR029419">
    <property type="entry name" value="Arg_succ_lyase_C"/>
</dbReference>
<dbReference type="InterPro" id="IPR009049">
    <property type="entry name" value="Argininosuccinate_lyase"/>
</dbReference>
<dbReference type="InterPro" id="IPR024083">
    <property type="entry name" value="Fumarase/histidase_N"/>
</dbReference>
<dbReference type="InterPro" id="IPR020557">
    <property type="entry name" value="Fumarate_lyase_CS"/>
</dbReference>
<dbReference type="InterPro" id="IPR000362">
    <property type="entry name" value="Fumarate_lyase_fam"/>
</dbReference>
<dbReference type="InterPro" id="IPR022761">
    <property type="entry name" value="Fumarate_lyase_N"/>
</dbReference>
<dbReference type="InterPro" id="IPR008948">
    <property type="entry name" value="L-Aspartase-like"/>
</dbReference>
<dbReference type="NCBIfam" id="TIGR00838">
    <property type="entry name" value="argH"/>
    <property type="match status" value="1"/>
</dbReference>
<dbReference type="PANTHER" id="PTHR43814">
    <property type="entry name" value="ARGININOSUCCINATE LYASE"/>
    <property type="match status" value="1"/>
</dbReference>
<dbReference type="PANTHER" id="PTHR43814:SF1">
    <property type="entry name" value="ARGININOSUCCINATE LYASE"/>
    <property type="match status" value="1"/>
</dbReference>
<dbReference type="Pfam" id="PF14698">
    <property type="entry name" value="ASL_C2"/>
    <property type="match status" value="1"/>
</dbReference>
<dbReference type="Pfam" id="PF00206">
    <property type="entry name" value="Lyase_1"/>
    <property type="match status" value="1"/>
</dbReference>
<dbReference type="PRINTS" id="PR00145">
    <property type="entry name" value="ARGSUCLYASE"/>
</dbReference>
<dbReference type="PRINTS" id="PR00149">
    <property type="entry name" value="FUMRATELYASE"/>
</dbReference>
<dbReference type="SUPFAM" id="SSF48557">
    <property type="entry name" value="L-aspartase-like"/>
    <property type="match status" value="1"/>
</dbReference>
<dbReference type="PROSITE" id="PS00163">
    <property type="entry name" value="FUMARATE_LYASES"/>
    <property type="match status" value="1"/>
</dbReference>
<reference key="1">
    <citation type="submission" date="2006-12" db="EMBL/GenBank/DDBJ databases">
        <title>Complete sequence of Halorhodospira halophila SL1.</title>
        <authorList>
            <consortium name="US DOE Joint Genome Institute"/>
            <person name="Copeland A."/>
            <person name="Lucas S."/>
            <person name="Lapidus A."/>
            <person name="Barry K."/>
            <person name="Detter J.C."/>
            <person name="Glavina del Rio T."/>
            <person name="Hammon N."/>
            <person name="Israni S."/>
            <person name="Dalin E."/>
            <person name="Tice H."/>
            <person name="Pitluck S."/>
            <person name="Saunders E."/>
            <person name="Brettin T."/>
            <person name="Bruce D."/>
            <person name="Han C."/>
            <person name="Tapia R."/>
            <person name="Schmutz J."/>
            <person name="Larimer F."/>
            <person name="Land M."/>
            <person name="Hauser L."/>
            <person name="Kyrpides N."/>
            <person name="Mikhailova N."/>
            <person name="Hoff W."/>
            <person name="Richardson P."/>
        </authorList>
    </citation>
    <scope>NUCLEOTIDE SEQUENCE [LARGE SCALE GENOMIC DNA]</scope>
    <source>
        <strain>DSM 244 / SL1</strain>
    </source>
</reference>
<keyword id="KW-0028">Amino-acid biosynthesis</keyword>
<keyword id="KW-0055">Arginine biosynthesis</keyword>
<keyword id="KW-0963">Cytoplasm</keyword>
<keyword id="KW-0456">Lyase</keyword>
<keyword id="KW-1185">Reference proteome</keyword>
<organism>
    <name type="scientific">Halorhodospira halophila (strain DSM 244 / SL1)</name>
    <name type="common">Ectothiorhodospira halophila (strain DSM 244 / SL1)</name>
    <dbReference type="NCBI Taxonomy" id="349124"/>
    <lineage>
        <taxon>Bacteria</taxon>
        <taxon>Pseudomonadati</taxon>
        <taxon>Pseudomonadota</taxon>
        <taxon>Gammaproteobacteria</taxon>
        <taxon>Chromatiales</taxon>
        <taxon>Ectothiorhodospiraceae</taxon>
        <taxon>Halorhodospira</taxon>
    </lineage>
</organism>
<comment type="catalytic activity">
    <reaction evidence="1">
        <text>2-(N(omega)-L-arginino)succinate = fumarate + L-arginine</text>
        <dbReference type="Rhea" id="RHEA:24020"/>
        <dbReference type="ChEBI" id="CHEBI:29806"/>
        <dbReference type="ChEBI" id="CHEBI:32682"/>
        <dbReference type="ChEBI" id="CHEBI:57472"/>
        <dbReference type="EC" id="4.3.2.1"/>
    </reaction>
</comment>
<comment type="pathway">
    <text evidence="1">Amino-acid biosynthesis; L-arginine biosynthesis; L-arginine from L-ornithine and carbamoyl phosphate: step 3/3.</text>
</comment>
<comment type="subcellular location">
    <subcellularLocation>
        <location evidence="1">Cytoplasm</location>
    </subcellularLocation>
</comment>
<comment type="similarity">
    <text evidence="1">Belongs to the lyase 1 family. Argininosuccinate lyase subfamily.</text>
</comment>
<feature type="chain" id="PRO_0000321439" description="Argininosuccinate lyase">
    <location>
        <begin position="1"/>
        <end position="465"/>
    </location>
</feature>
<name>ARLY_HALHL</name>
<accession>A1WVT8</accession>
<proteinExistence type="inferred from homology"/>
<protein>
    <recommendedName>
        <fullName evidence="1">Argininosuccinate lyase</fullName>
        <shortName evidence="1">ASAL</shortName>
        <ecNumber evidence="1">4.3.2.1</ecNumber>
    </recommendedName>
    <alternativeName>
        <fullName evidence="1">Arginosuccinase</fullName>
    </alternativeName>
</protein>
<gene>
    <name evidence="1" type="primary">argH</name>
    <name type="ordered locus">Hhal_1024</name>
</gene>